<dbReference type="EMBL" id="CM009299">
    <property type="protein sequence ID" value="ERP56507.1"/>
    <property type="molecule type" value="Genomic_DNA"/>
</dbReference>
<dbReference type="FunCoup" id="B9NBE5">
    <property type="interactions" value="351"/>
</dbReference>
<dbReference type="STRING" id="3694.B9NBE5"/>
<dbReference type="EnsemblPlants" id="Potri.010G204700.1.v4.1">
    <property type="protein sequence ID" value="Potri.010G204700.1.v4.1"/>
    <property type="gene ID" value="Potri.010G204700.v4.1"/>
</dbReference>
<dbReference type="Gramene" id="Potri.010G204700.1.v4.1">
    <property type="protein sequence ID" value="Potri.010G204700.1.v4.1"/>
    <property type="gene ID" value="Potri.010G204700.v4.1"/>
</dbReference>
<dbReference type="KEGG" id="pop:18102718"/>
<dbReference type="InParanoid" id="B9NBE5"/>
<dbReference type="OMA" id="IGNAYSL"/>
<dbReference type="OrthoDB" id="685197at2759"/>
<dbReference type="Proteomes" id="UP000006729">
    <property type="component" value="Chromosome 10"/>
</dbReference>
<dbReference type="ExpressionAtlas" id="B9NBE5">
    <property type="expression patterns" value="baseline and differential"/>
</dbReference>
<dbReference type="GO" id="GO:0005886">
    <property type="term" value="C:plasma membrane"/>
    <property type="evidence" value="ECO:0007669"/>
    <property type="project" value="UniProtKB-SubCell"/>
</dbReference>
<dbReference type="InterPro" id="IPR006702">
    <property type="entry name" value="CASP_dom"/>
</dbReference>
<dbReference type="PANTHER" id="PTHR33573">
    <property type="entry name" value="CASP-LIKE PROTEIN 4A4"/>
    <property type="match status" value="1"/>
</dbReference>
<dbReference type="PANTHER" id="PTHR33573:SF40">
    <property type="entry name" value="CASP-LIKE PROTEIN 4D2"/>
    <property type="match status" value="1"/>
</dbReference>
<dbReference type="Pfam" id="PF04535">
    <property type="entry name" value="CASP_dom"/>
    <property type="match status" value="1"/>
</dbReference>
<sequence>MTAPTAPSMAAPPAPSMVSRMTALFLRVLTFAFLMVSLVIMTTNTGTIEIGIDEFKVRSKDFYSYRYMLAAIAFGLTYTILQIALTLNHISKRNGAQTSGDGNLVFDFYGDKVVSYILATGAAAAFGATKELKTQLAGLGGDKFFNKGYASASLLLLGFVCTAILSVFSSYALPKKV</sequence>
<name>CSPLL_POPTR</name>
<proteinExistence type="evidence at transcript level"/>
<gene>
    <name type="ORF">POPTR_0010s21230g</name>
</gene>
<feature type="chain" id="PRO_0000391552" description="CASP-like protein 4D1">
    <location>
        <begin position="1"/>
        <end position="177"/>
    </location>
</feature>
<feature type="topological domain" description="Cytoplasmic" evidence="2">
    <location>
        <begin position="1"/>
        <end position="20"/>
    </location>
</feature>
<feature type="transmembrane region" description="Helical" evidence="2">
    <location>
        <begin position="21"/>
        <end position="41"/>
    </location>
</feature>
<feature type="topological domain" description="Extracellular" evidence="2">
    <location>
        <begin position="42"/>
        <end position="66"/>
    </location>
</feature>
<feature type="transmembrane region" description="Helical" evidence="2">
    <location>
        <begin position="67"/>
        <end position="87"/>
    </location>
</feature>
<feature type="topological domain" description="Cytoplasmic" evidence="2">
    <location>
        <begin position="88"/>
        <end position="107"/>
    </location>
</feature>
<feature type="transmembrane region" description="Helical" evidence="2">
    <location>
        <begin position="108"/>
        <end position="128"/>
    </location>
</feature>
<feature type="topological domain" description="Extracellular" evidence="2">
    <location>
        <begin position="129"/>
        <end position="153"/>
    </location>
</feature>
<feature type="transmembrane region" description="Helical" evidence="2">
    <location>
        <begin position="154"/>
        <end position="174"/>
    </location>
</feature>
<feature type="topological domain" description="Cytoplasmic" evidence="2">
    <location>
        <begin position="175"/>
        <end position="177"/>
    </location>
</feature>
<keyword id="KW-1003">Cell membrane</keyword>
<keyword id="KW-0472">Membrane</keyword>
<keyword id="KW-1185">Reference proteome</keyword>
<keyword id="KW-0812">Transmembrane</keyword>
<keyword id="KW-1133">Transmembrane helix</keyword>
<evidence type="ECO:0000250" key="1"/>
<evidence type="ECO:0000255" key="2"/>
<evidence type="ECO:0000305" key="3"/>
<accession>B9NBE5</accession>
<accession>U5G4Y3</accession>
<reference key="1">
    <citation type="journal article" date="2006" name="Science">
        <title>The genome of black cottonwood, Populus trichocarpa (Torr. &amp; Gray).</title>
        <authorList>
            <person name="Tuskan G.A."/>
            <person name="Difazio S."/>
            <person name="Jansson S."/>
            <person name="Bohlmann J."/>
            <person name="Grigoriev I."/>
            <person name="Hellsten U."/>
            <person name="Putnam N."/>
            <person name="Ralph S."/>
            <person name="Rombauts S."/>
            <person name="Salamov A."/>
            <person name="Schein J."/>
            <person name="Sterck L."/>
            <person name="Aerts A."/>
            <person name="Bhalerao R.R."/>
            <person name="Bhalerao R.P."/>
            <person name="Blaudez D."/>
            <person name="Boerjan W."/>
            <person name="Brun A."/>
            <person name="Brunner A."/>
            <person name="Busov V."/>
            <person name="Campbell M."/>
            <person name="Carlson J."/>
            <person name="Chalot M."/>
            <person name="Chapman J."/>
            <person name="Chen G.-L."/>
            <person name="Cooper D."/>
            <person name="Coutinho P.M."/>
            <person name="Couturier J."/>
            <person name="Covert S."/>
            <person name="Cronk Q."/>
            <person name="Cunningham R."/>
            <person name="Davis J."/>
            <person name="Degroeve S."/>
            <person name="Dejardin A."/>
            <person name="dePamphilis C.W."/>
            <person name="Detter J."/>
            <person name="Dirks B."/>
            <person name="Dubchak I."/>
            <person name="Duplessis S."/>
            <person name="Ehlting J."/>
            <person name="Ellis B."/>
            <person name="Gendler K."/>
            <person name="Goodstein D."/>
            <person name="Gribskov M."/>
            <person name="Grimwood J."/>
            <person name="Groover A."/>
            <person name="Gunter L."/>
            <person name="Hamberger B."/>
            <person name="Heinze B."/>
            <person name="Helariutta Y."/>
            <person name="Henrissat B."/>
            <person name="Holligan D."/>
            <person name="Holt R."/>
            <person name="Huang W."/>
            <person name="Islam-Faridi N."/>
            <person name="Jones S."/>
            <person name="Jones-Rhoades M."/>
            <person name="Jorgensen R."/>
            <person name="Joshi C."/>
            <person name="Kangasjaervi J."/>
            <person name="Karlsson J."/>
            <person name="Kelleher C."/>
            <person name="Kirkpatrick R."/>
            <person name="Kirst M."/>
            <person name="Kohler A."/>
            <person name="Kalluri U."/>
            <person name="Larimer F."/>
            <person name="Leebens-Mack J."/>
            <person name="Leple J.-C."/>
            <person name="Locascio P."/>
            <person name="Lou Y."/>
            <person name="Lucas S."/>
            <person name="Martin F."/>
            <person name="Montanini B."/>
            <person name="Napoli C."/>
            <person name="Nelson D.R."/>
            <person name="Nelson C."/>
            <person name="Nieminen K."/>
            <person name="Nilsson O."/>
            <person name="Pereda V."/>
            <person name="Peter G."/>
            <person name="Philippe R."/>
            <person name="Pilate G."/>
            <person name="Poliakov A."/>
            <person name="Razumovskaya J."/>
            <person name="Richardson P."/>
            <person name="Rinaldi C."/>
            <person name="Ritland K."/>
            <person name="Rouze P."/>
            <person name="Ryaboy D."/>
            <person name="Schmutz J."/>
            <person name="Schrader J."/>
            <person name="Segerman B."/>
            <person name="Shin H."/>
            <person name="Siddiqui A."/>
            <person name="Sterky F."/>
            <person name="Terry A."/>
            <person name="Tsai C.-J."/>
            <person name="Uberbacher E."/>
            <person name="Unneberg P."/>
            <person name="Vahala J."/>
            <person name="Wall K."/>
            <person name="Wessler S."/>
            <person name="Yang G."/>
            <person name="Yin T."/>
            <person name="Douglas C."/>
            <person name="Marra M."/>
            <person name="Sandberg G."/>
            <person name="Van de Peer Y."/>
            <person name="Rokhsar D.S."/>
        </authorList>
    </citation>
    <scope>NUCLEOTIDE SEQUENCE [LARGE SCALE GENOMIC DNA]</scope>
    <source>
        <strain>cv. Nisqually</strain>
    </source>
</reference>
<reference key="2">
    <citation type="submission" date="2008-12" db="EMBL/GenBank/DDBJ databases">
        <authorList>
            <consortium name="US DOE Joint Genome Institute (JGI-PGF)"/>
            <person name="Grigoriev I.V."/>
            <person name="Terry A."/>
            <person name="Salamov A.A."/>
            <person name="Otillar R."/>
            <person name="Lou Y."/>
            <person name="Lucas S."/>
            <person name="Hammon N."/>
            <person name="Glavina del Rio T."/>
            <person name="Detter J."/>
            <person name="Kalin E."/>
            <person name="Tice H."/>
            <person name="Pitluck S."/>
            <person name="Chapman J."/>
            <person name="Putnam N.H."/>
            <person name="Brunner A."/>
            <person name="Busov V."/>
            <person name="Campbell M."/>
            <person name="Chalot M."/>
            <person name="Covert S."/>
            <person name="Davis J."/>
            <person name="DiFazio S."/>
            <person name="Gribskov M."/>
            <person name="Gunter L."/>
            <person name="Hamberger B."/>
            <person name="Jansson S."/>
            <person name="Joshi C."/>
            <person name="Larimer F."/>
            <person name="Martin F."/>
            <person name="Napoli C."/>
            <person name="Nelson D."/>
            <person name="Ralph S."/>
            <person name="Rombauts S."/>
            <person name="Rouze P."/>
            <person name="Schrader J."/>
            <person name="Tsai C."/>
            <person name="Vahala J."/>
            <person name="Tuskan G."/>
            <person name="Rokhsar D."/>
        </authorList>
    </citation>
    <scope>GENOME REANNOTATION</scope>
    <source>
        <strain>cv. Nisqually</strain>
    </source>
</reference>
<reference key="3">
    <citation type="journal article" date="2014" name="Plant Physiol.">
        <title>Functional and evolutionary analysis of the CASPARIAN STRIP MEMBRANE DOMAIN PROTEIN family.</title>
        <authorList>
            <person name="Roppolo D."/>
            <person name="Boeckmann B."/>
            <person name="Pfister A."/>
            <person name="Boutet E."/>
            <person name="Rubio M.C."/>
            <person name="Denervaud-Tendon V."/>
            <person name="Vermeer J.E."/>
            <person name="Gheyselinck J."/>
            <person name="Xenarios I."/>
            <person name="Geldner N."/>
        </authorList>
    </citation>
    <scope>GENE FAMILY</scope>
    <scope>NOMENCLATURE</scope>
</reference>
<comment type="subunit">
    <text evidence="1">Homodimer and heterodimers.</text>
</comment>
<comment type="subcellular location">
    <subcellularLocation>
        <location evidence="1">Cell membrane</location>
        <topology evidence="1">Multi-pass membrane protein</topology>
    </subcellularLocation>
</comment>
<comment type="similarity">
    <text evidence="3">Belongs to the Casparian strip membrane proteins (CASP) family.</text>
</comment>
<protein>
    <recommendedName>
        <fullName>CASP-like protein 4D1</fullName>
        <shortName>PtCASPL4D1</shortName>
    </recommendedName>
</protein>
<organism>
    <name type="scientific">Populus trichocarpa</name>
    <name type="common">Western balsam poplar</name>
    <name type="synonym">Populus balsamifera subsp. trichocarpa</name>
    <dbReference type="NCBI Taxonomy" id="3694"/>
    <lineage>
        <taxon>Eukaryota</taxon>
        <taxon>Viridiplantae</taxon>
        <taxon>Streptophyta</taxon>
        <taxon>Embryophyta</taxon>
        <taxon>Tracheophyta</taxon>
        <taxon>Spermatophyta</taxon>
        <taxon>Magnoliopsida</taxon>
        <taxon>eudicotyledons</taxon>
        <taxon>Gunneridae</taxon>
        <taxon>Pentapetalae</taxon>
        <taxon>rosids</taxon>
        <taxon>fabids</taxon>
        <taxon>Malpighiales</taxon>
        <taxon>Salicaceae</taxon>
        <taxon>Saliceae</taxon>
        <taxon>Populus</taxon>
    </lineage>
</organism>